<evidence type="ECO:0000255" key="1">
    <source>
        <dbReference type="HAMAP-Rule" id="MF_00041"/>
    </source>
</evidence>
<proteinExistence type="inferred from homology"/>
<feature type="chain" id="PRO_0000332839" description="Cysteine--tRNA ligase">
    <location>
        <begin position="1"/>
        <end position="474"/>
    </location>
</feature>
<feature type="short sequence motif" description="'HIGH' region">
    <location>
        <begin position="29"/>
        <end position="39"/>
    </location>
</feature>
<feature type="short sequence motif" description="'KMSKS' region">
    <location>
        <begin position="271"/>
        <end position="275"/>
    </location>
</feature>
<feature type="binding site" evidence="1">
    <location>
        <position position="27"/>
    </location>
    <ligand>
        <name>Zn(2+)</name>
        <dbReference type="ChEBI" id="CHEBI:29105"/>
    </ligand>
</feature>
<feature type="binding site" evidence="1">
    <location>
        <position position="212"/>
    </location>
    <ligand>
        <name>Zn(2+)</name>
        <dbReference type="ChEBI" id="CHEBI:29105"/>
    </ligand>
</feature>
<feature type="binding site" evidence="1">
    <location>
        <position position="237"/>
    </location>
    <ligand>
        <name>Zn(2+)</name>
        <dbReference type="ChEBI" id="CHEBI:29105"/>
    </ligand>
</feature>
<feature type="binding site" evidence="1">
    <location>
        <position position="241"/>
    </location>
    <ligand>
        <name>Zn(2+)</name>
        <dbReference type="ChEBI" id="CHEBI:29105"/>
    </ligand>
</feature>
<feature type="binding site" evidence="1">
    <location>
        <position position="274"/>
    </location>
    <ligand>
        <name>ATP</name>
        <dbReference type="ChEBI" id="CHEBI:30616"/>
    </ligand>
</feature>
<organism>
    <name type="scientific">Lactobacillus delbrueckii subsp. bulgaricus (strain ATCC BAA-365 / Lb-18)</name>
    <dbReference type="NCBI Taxonomy" id="321956"/>
    <lineage>
        <taxon>Bacteria</taxon>
        <taxon>Bacillati</taxon>
        <taxon>Bacillota</taxon>
        <taxon>Bacilli</taxon>
        <taxon>Lactobacillales</taxon>
        <taxon>Lactobacillaceae</taxon>
        <taxon>Lactobacillus</taxon>
    </lineage>
</organism>
<sequence length="474" mass="53713">MKLFNTLTRQKEEFKPLVPGQVSMYVCGPTVYNYIHIGNARSAIAFDTIRRYFEYKGYKVNYVSNFTDVDDKMINEAGAEGTTVPELAERYIQAFLEDTRALNIEEATLHPRATHEIPAIIDFIQTLIDKGYAYEADGDVYYRAKKFADYGHLSDQNIDQLEEGASQHVNDEEQGRKEDPIDFALWKGQKAADEIAWDSPWGKGRPGWHIECSVMSTKYLGDTLDIHGGGQDLEFPHHENEIAQSEAKTGKKFVNYWLHNGFVTVGKDEEKMSKSLHNFVTVYDILKNVDPQVLRFFMASVQYRSQINYSEENLEQAANILGRFKNTLEGINYRLADATEGLPDPDLAKLVTETTAKFEAAMDDDFNVQNALTAIYEALPAVNSNANAEKADKESLRLFAKKLAAWLSVFGLDVDKLLAKEAGDDDAVIEELVAQRTEARKNKDWAKSDELRDQLKEMGVVLKDTPQGTRWSRE</sequence>
<reference key="1">
    <citation type="journal article" date="2006" name="Proc. Natl. Acad. Sci. U.S.A.">
        <title>Comparative genomics of the lactic acid bacteria.</title>
        <authorList>
            <person name="Makarova K.S."/>
            <person name="Slesarev A."/>
            <person name="Wolf Y.I."/>
            <person name="Sorokin A."/>
            <person name="Mirkin B."/>
            <person name="Koonin E.V."/>
            <person name="Pavlov A."/>
            <person name="Pavlova N."/>
            <person name="Karamychev V."/>
            <person name="Polouchine N."/>
            <person name="Shakhova V."/>
            <person name="Grigoriev I."/>
            <person name="Lou Y."/>
            <person name="Rohksar D."/>
            <person name="Lucas S."/>
            <person name="Huang K."/>
            <person name="Goodstein D.M."/>
            <person name="Hawkins T."/>
            <person name="Plengvidhya V."/>
            <person name="Welker D."/>
            <person name="Hughes J."/>
            <person name="Goh Y."/>
            <person name="Benson A."/>
            <person name="Baldwin K."/>
            <person name="Lee J.-H."/>
            <person name="Diaz-Muniz I."/>
            <person name="Dosti B."/>
            <person name="Smeianov V."/>
            <person name="Wechter W."/>
            <person name="Barabote R."/>
            <person name="Lorca G."/>
            <person name="Altermann E."/>
            <person name="Barrangou R."/>
            <person name="Ganesan B."/>
            <person name="Xie Y."/>
            <person name="Rawsthorne H."/>
            <person name="Tamir D."/>
            <person name="Parker C."/>
            <person name="Breidt F."/>
            <person name="Broadbent J.R."/>
            <person name="Hutkins R."/>
            <person name="O'Sullivan D."/>
            <person name="Steele J."/>
            <person name="Unlu G."/>
            <person name="Saier M.H. Jr."/>
            <person name="Klaenhammer T."/>
            <person name="Richardson P."/>
            <person name="Kozyavkin S."/>
            <person name="Weimer B.C."/>
            <person name="Mills D.A."/>
        </authorList>
    </citation>
    <scope>NUCLEOTIDE SEQUENCE [LARGE SCALE GENOMIC DNA]</scope>
    <source>
        <strain>ATCC BAA-365 / Lb-18</strain>
    </source>
</reference>
<name>SYC_LACDB</name>
<gene>
    <name evidence="1" type="primary">cysS</name>
    <name type="ordered locus">LBUL_1554</name>
</gene>
<keyword id="KW-0030">Aminoacyl-tRNA synthetase</keyword>
<keyword id="KW-0067">ATP-binding</keyword>
<keyword id="KW-0963">Cytoplasm</keyword>
<keyword id="KW-0436">Ligase</keyword>
<keyword id="KW-0479">Metal-binding</keyword>
<keyword id="KW-0547">Nucleotide-binding</keyword>
<keyword id="KW-0648">Protein biosynthesis</keyword>
<keyword id="KW-0862">Zinc</keyword>
<accession>Q048S9</accession>
<dbReference type="EC" id="6.1.1.16" evidence="1"/>
<dbReference type="EMBL" id="CP000412">
    <property type="protein sequence ID" value="ABJ59043.1"/>
    <property type="molecule type" value="Genomic_DNA"/>
</dbReference>
<dbReference type="RefSeq" id="WP_011678505.1">
    <property type="nucleotide sequence ID" value="NC_008529.1"/>
</dbReference>
<dbReference type="SMR" id="Q048S9"/>
<dbReference type="KEGG" id="lbu:LBUL_1554"/>
<dbReference type="HOGENOM" id="CLU_013528_0_1_9"/>
<dbReference type="BioCyc" id="LDEL321956:LBUL_RS07335-MONOMER"/>
<dbReference type="GO" id="GO:0005829">
    <property type="term" value="C:cytosol"/>
    <property type="evidence" value="ECO:0007669"/>
    <property type="project" value="TreeGrafter"/>
</dbReference>
<dbReference type="GO" id="GO:0005524">
    <property type="term" value="F:ATP binding"/>
    <property type="evidence" value="ECO:0007669"/>
    <property type="project" value="UniProtKB-UniRule"/>
</dbReference>
<dbReference type="GO" id="GO:0004817">
    <property type="term" value="F:cysteine-tRNA ligase activity"/>
    <property type="evidence" value="ECO:0007669"/>
    <property type="project" value="UniProtKB-UniRule"/>
</dbReference>
<dbReference type="GO" id="GO:0008270">
    <property type="term" value="F:zinc ion binding"/>
    <property type="evidence" value="ECO:0007669"/>
    <property type="project" value="UniProtKB-UniRule"/>
</dbReference>
<dbReference type="GO" id="GO:0006423">
    <property type="term" value="P:cysteinyl-tRNA aminoacylation"/>
    <property type="evidence" value="ECO:0007669"/>
    <property type="project" value="UniProtKB-UniRule"/>
</dbReference>
<dbReference type="CDD" id="cd00672">
    <property type="entry name" value="CysRS_core"/>
    <property type="match status" value="1"/>
</dbReference>
<dbReference type="FunFam" id="3.40.50.620:FF:000009">
    <property type="entry name" value="Cysteine--tRNA ligase"/>
    <property type="match status" value="1"/>
</dbReference>
<dbReference type="Gene3D" id="1.20.120.1910">
    <property type="entry name" value="Cysteine-tRNA ligase, C-terminal anti-codon recognition domain"/>
    <property type="match status" value="1"/>
</dbReference>
<dbReference type="Gene3D" id="3.40.50.620">
    <property type="entry name" value="HUPs"/>
    <property type="match status" value="1"/>
</dbReference>
<dbReference type="HAMAP" id="MF_00041">
    <property type="entry name" value="Cys_tRNA_synth"/>
    <property type="match status" value="1"/>
</dbReference>
<dbReference type="InterPro" id="IPR015803">
    <property type="entry name" value="Cys-tRNA-ligase"/>
</dbReference>
<dbReference type="InterPro" id="IPR015273">
    <property type="entry name" value="Cys-tRNA-synt_Ia_DALR"/>
</dbReference>
<dbReference type="InterPro" id="IPR024909">
    <property type="entry name" value="Cys-tRNA/MSH_ligase"/>
</dbReference>
<dbReference type="InterPro" id="IPR056411">
    <property type="entry name" value="CysS_C"/>
</dbReference>
<dbReference type="InterPro" id="IPR014729">
    <property type="entry name" value="Rossmann-like_a/b/a_fold"/>
</dbReference>
<dbReference type="InterPro" id="IPR032678">
    <property type="entry name" value="tRNA-synt_1_cat_dom"/>
</dbReference>
<dbReference type="InterPro" id="IPR009080">
    <property type="entry name" value="tRNAsynth_Ia_anticodon-bd"/>
</dbReference>
<dbReference type="NCBIfam" id="TIGR00435">
    <property type="entry name" value="cysS"/>
    <property type="match status" value="1"/>
</dbReference>
<dbReference type="PANTHER" id="PTHR10890:SF3">
    <property type="entry name" value="CYSTEINE--TRNA LIGASE, CYTOPLASMIC"/>
    <property type="match status" value="1"/>
</dbReference>
<dbReference type="PANTHER" id="PTHR10890">
    <property type="entry name" value="CYSTEINYL-TRNA SYNTHETASE"/>
    <property type="match status" value="1"/>
</dbReference>
<dbReference type="Pfam" id="PF23493">
    <property type="entry name" value="CysS_C"/>
    <property type="match status" value="1"/>
</dbReference>
<dbReference type="Pfam" id="PF09190">
    <property type="entry name" value="DALR_2"/>
    <property type="match status" value="1"/>
</dbReference>
<dbReference type="Pfam" id="PF01406">
    <property type="entry name" value="tRNA-synt_1e"/>
    <property type="match status" value="1"/>
</dbReference>
<dbReference type="PRINTS" id="PR00983">
    <property type="entry name" value="TRNASYNTHCYS"/>
</dbReference>
<dbReference type="SMART" id="SM00840">
    <property type="entry name" value="DALR_2"/>
    <property type="match status" value="1"/>
</dbReference>
<dbReference type="SUPFAM" id="SSF47323">
    <property type="entry name" value="Anticodon-binding domain of a subclass of class I aminoacyl-tRNA synthetases"/>
    <property type="match status" value="1"/>
</dbReference>
<dbReference type="SUPFAM" id="SSF52374">
    <property type="entry name" value="Nucleotidylyl transferase"/>
    <property type="match status" value="1"/>
</dbReference>
<protein>
    <recommendedName>
        <fullName evidence="1">Cysteine--tRNA ligase</fullName>
        <ecNumber evidence="1">6.1.1.16</ecNumber>
    </recommendedName>
    <alternativeName>
        <fullName evidence="1">Cysteinyl-tRNA synthetase</fullName>
        <shortName evidence="1">CysRS</shortName>
    </alternativeName>
</protein>
<comment type="catalytic activity">
    <reaction evidence="1">
        <text>tRNA(Cys) + L-cysteine + ATP = L-cysteinyl-tRNA(Cys) + AMP + diphosphate</text>
        <dbReference type="Rhea" id="RHEA:17773"/>
        <dbReference type="Rhea" id="RHEA-COMP:9661"/>
        <dbReference type="Rhea" id="RHEA-COMP:9679"/>
        <dbReference type="ChEBI" id="CHEBI:30616"/>
        <dbReference type="ChEBI" id="CHEBI:33019"/>
        <dbReference type="ChEBI" id="CHEBI:35235"/>
        <dbReference type="ChEBI" id="CHEBI:78442"/>
        <dbReference type="ChEBI" id="CHEBI:78517"/>
        <dbReference type="ChEBI" id="CHEBI:456215"/>
        <dbReference type="EC" id="6.1.1.16"/>
    </reaction>
</comment>
<comment type="cofactor">
    <cofactor evidence="1">
        <name>Zn(2+)</name>
        <dbReference type="ChEBI" id="CHEBI:29105"/>
    </cofactor>
    <text evidence="1">Binds 1 zinc ion per subunit.</text>
</comment>
<comment type="subunit">
    <text evidence="1">Monomer.</text>
</comment>
<comment type="subcellular location">
    <subcellularLocation>
        <location evidence="1">Cytoplasm</location>
    </subcellularLocation>
</comment>
<comment type="similarity">
    <text evidence="1">Belongs to the class-I aminoacyl-tRNA synthetase family.</text>
</comment>